<dbReference type="EC" id="2.7.1.28"/>
<dbReference type="EC" id="2.7.1.29"/>
<dbReference type="EMBL" id="AY383554">
    <property type="protein sequence ID" value="AAC27705.1"/>
    <property type="molecule type" value="Genomic_DNA"/>
</dbReference>
<dbReference type="SMR" id="O60017"/>
<dbReference type="BioCyc" id="MetaCyc:MONOMER-13163"/>
<dbReference type="UniPathway" id="UPA00617">
    <property type="reaction ID" value="UER00669"/>
</dbReference>
<dbReference type="GO" id="GO:0005829">
    <property type="term" value="C:cytosol"/>
    <property type="evidence" value="ECO:0007669"/>
    <property type="project" value="TreeGrafter"/>
</dbReference>
<dbReference type="GO" id="GO:0005524">
    <property type="term" value="F:ATP binding"/>
    <property type="evidence" value="ECO:0007669"/>
    <property type="project" value="UniProtKB-KW"/>
</dbReference>
<dbReference type="GO" id="GO:0004371">
    <property type="term" value="F:glycerone kinase activity"/>
    <property type="evidence" value="ECO:0007669"/>
    <property type="project" value="UniProtKB-EC"/>
</dbReference>
<dbReference type="GO" id="GO:0050354">
    <property type="term" value="F:triokinase activity"/>
    <property type="evidence" value="ECO:0007669"/>
    <property type="project" value="UniProtKB-EC"/>
</dbReference>
<dbReference type="GO" id="GO:0019588">
    <property type="term" value="P:anaerobic glycerol catabolic process"/>
    <property type="evidence" value="ECO:0007669"/>
    <property type="project" value="UniProtKB-UniPathway"/>
</dbReference>
<dbReference type="FunFam" id="1.25.40.340:FF:000001">
    <property type="entry name" value="Dihydroxyacetone kinase 1"/>
    <property type="match status" value="1"/>
</dbReference>
<dbReference type="FunFam" id="3.30.1180.20:FF:000001">
    <property type="entry name" value="Dihydroxyacetone kinase 1"/>
    <property type="match status" value="1"/>
</dbReference>
<dbReference type="FunFam" id="3.40.50.10440:FF:000001">
    <property type="entry name" value="Dihydroxyacetone kinase, DhaK subunit"/>
    <property type="match status" value="1"/>
</dbReference>
<dbReference type="Gene3D" id="1.25.40.340">
    <property type="match status" value="1"/>
</dbReference>
<dbReference type="Gene3D" id="3.40.50.10440">
    <property type="entry name" value="Dihydroxyacetone kinase, domain 1"/>
    <property type="match status" value="1"/>
</dbReference>
<dbReference type="Gene3D" id="3.30.1180.20">
    <property type="entry name" value="Dihydroxyacetone kinase, domain 2"/>
    <property type="match status" value="1"/>
</dbReference>
<dbReference type="InterPro" id="IPR012734">
    <property type="entry name" value="DhaK_ATP"/>
</dbReference>
<dbReference type="InterPro" id="IPR004006">
    <property type="entry name" value="DhaK_dom"/>
</dbReference>
<dbReference type="InterPro" id="IPR004007">
    <property type="entry name" value="DhaL_dom"/>
</dbReference>
<dbReference type="InterPro" id="IPR036117">
    <property type="entry name" value="DhaL_dom_sf"/>
</dbReference>
<dbReference type="InterPro" id="IPR050861">
    <property type="entry name" value="Dihydroxyacetone_Kinase"/>
</dbReference>
<dbReference type="NCBIfam" id="TIGR02361">
    <property type="entry name" value="dak_ATP"/>
    <property type="match status" value="1"/>
</dbReference>
<dbReference type="PANTHER" id="PTHR28629">
    <property type="entry name" value="TRIOKINASE/FMN CYCLASE"/>
    <property type="match status" value="1"/>
</dbReference>
<dbReference type="PANTHER" id="PTHR28629:SF4">
    <property type="entry name" value="TRIOKINASE_FMN CYCLASE"/>
    <property type="match status" value="1"/>
</dbReference>
<dbReference type="Pfam" id="PF02733">
    <property type="entry name" value="Dak1"/>
    <property type="match status" value="1"/>
</dbReference>
<dbReference type="Pfam" id="PF02734">
    <property type="entry name" value="Dak2"/>
    <property type="match status" value="1"/>
</dbReference>
<dbReference type="SMART" id="SM01120">
    <property type="entry name" value="Dak2"/>
    <property type="match status" value="1"/>
</dbReference>
<dbReference type="SUPFAM" id="SSF82549">
    <property type="entry name" value="DAK1/DegV-like"/>
    <property type="match status" value="1"/>
</dbReference>
<dbReference type="SUPFAM" id="SSF101473">
    <property type="entry name" value="DhaL-like"/>
    <property type="match status" value="1"/>
</dbReference>
<dbReference type="PROSITE" id="PS51481">
    <property type="entry name" value="DHAK"/>
    <property type="match status" value="1"/>
</dbReference>
<dbReference type="PROSITE" id="PS51480">
    <property type="entry name" value="DHAL"/>
    <property type="match status" value="1"/>
</dbReference>
<feature type="chain" id="PRO_0000121518" description="Dihydroxyacetone kinase">
    <location>
        <begin position="1"/>
        <end position="609"/>
    </location>
</feature>
<feature type="domain" description="DhaK" evidence="3">
    <location>
        <begin position="8"/>
        <end position="355"/>
    </location>
</feature>
<feature type="domain" description="DhaL" evidence="2">
    <location>
        <begin position="392"/>
        <end position="600"/>
    </location>
</feature>
<feature type="active site" description="Tele-hemiaminal-histidine intermediate" evidence="3">
    <location>
        <position position="232"/>
    </location>
</feature>
<feature type="binding site" evidence="1">
    <location>
        <begin position="53"/>
        <end position="56"/>
    </location>
    <ligand>
        <name>substrate</name>
    </ligand>
</feature>
<feature type="binding site" evidence="1">
    <location>
        <position position="104"/>
    </location>
    <ligand>
        <name>substrate</name>
    </ligand>
</feature>
<feature type="binding site" evidence="1">
    <location>
        <position position="109"/>
    </location>
    <ligand>
        <name>substrate</name>
    </ligand>
</feature>
<feature type="binding site" evidence="1">
    <location>
        <begin position="421"/>
        <end position="424"/>
    </location>
    <ligand>
        <name>ATP</name>
        <dbReference type="ChEBI" id="CHEBI:30616"/>
    </ligand>
</feature>
<feature type="binding site" evidence="1">
    <location>
        <begin position="467"/>
        <end position="468"/>
    </location>
    <ligand>
        <name>ATP</name>
        <dbReference type="ChEBI" id="CHEBI:30616"/>
    </ligand>
</feature>
<feature type="binding site" evidence="1">
    <location>
        <begin position="523"/>
        <end position="524"/>
    </location>
    <ligand>
        <name>ATP</name>
        <dbReference type="ChEBI" id="CHEBI:30616"/>
    </ligand>
</feature>
<feature type="binding site" evidence="1">
    <location>
        <begin position="585"/>
        <end position="587"/>
    </location>
    <ligand>
        <name>ATP</name>
        <dbReference type="ChEBI" id="CHEBI:30616"/>
    </ligand>
</feature>
<protein>
    <recommendedName>
        <fullName>Dihydroxyacetone kinase</fullName>
        <shortName>DHA kinase</shortName>
        <ecNumber>2.7.1.28</ecNumber>
        <ecNumber>2.7.1.29</ecNumber>
    </recommendedName>
    <alternativeName>
        <fullName>Glycerone kinase</fullName>
    </alternativeName>
    <alternativeName>
        <fullName>Triokinase</fullName>
    </alternativeName>
    <alternativeName>
        <fullName>Triose kinase</fullName>
    </alternativeName>
</protein>
<reference key="1">
    <citation type="journal article" date="1998" name="Curr. Genet.">
        <title>The Hansenula polymorpha per6 mutant is affected in two adjacent genes which encode dihydroxyacetone kinase and a novel protein, Pak1p, involved in peroxisome integrity.</title>
        <authorList>
            <person name="van der Klei I.J."/>
            <person name="van der Heide M."/>
            <person name="Baerends R.J.S."/>
            <person name="Rechinger K.-B."/>
            <person name="Nicolay K."/>
            <person name="Kiel J.A.K.W."/>
            <person name="Veenhuis M."/>
        </authorList>
    </citation>
    <scope>NUCLEOTIDE SEQUENCE [GENOMIC DNA]</scope>
    <source>
        <strain>ATCC 34438 / CBS 4732 / DSM 70277 / JCM 3621 / NBRC 1476 / NRRL Y-5445</strain>
    </source>
</reference>
<organism>
    <name type="scientific">Pichia angusta</name>
    <name type="common">Yeast</name>
    <name type="synonym">Hansenula polymorpha</name>
    <dbReference type="NCBI Taxonomy" id="870730"/>
    <lineage>
        <taxon>Eukaryota</taxon>
        <taxon>Fungi</taxon>
        <taxon>Dikarya</taxon>
        <taxon>Ascomycota</taxon>
        <taxon>Saccharomycotina</taxon>
        <taxon>Pichiomycetes</taxon>
        <taxon>Pichiales</taxon>
        <taxon>Pichiaceae</taxon>
        <taxon>Ogataea</taxon>
    </lineage>
</organism>
<keyword id="KW-0067">ATP-binding</keyword>
<keyword id="KW-0319">Glycerol metabolism</keyword>
<keyword id="KW-0418">Kinase</keyword>
<keyword id="KW-0547">Nucleotide-binding</keyword>
<keyword id="KW-0808">Transferase</keyword>
<sequence length="609" mass="65071">MSSKHWNYKQDLVHAHLKGLCHANPDLQFIESERVVINKHSKPDKVMILSGGGSGHEPLHAGFVGEGCLDVGVAGFVFASPSTKQIVSGLKAKPSDKGTLIVVKNYTGDILHFGLAAERAKAEGVPVELLIVQDDVSVGRTKNGMVGRRGLAGTSLVHKIVGAKAAKDSNKASLSEVYQLGEAVVANLVTIGASLDHCTIPGNRHHESESDDEDEQKHLLKEDEIEVGMGIHNESGIKRVSPIPTIDTLVADLLKYLLDKSDEERHYVDFDSSDEVVLMINNLGGTSNLELYAIQNTVVEQLATDYKIKPARVYTGAYTTSLDGPGFSITLLNVTRAGGKEVFDCLDYPTKVPGWNSSYTTAEWAAKSESFVIDAPPVSDASATSKVRFSSSTVKAVLESGCKKLLTKEPKITLYDTVAGDGDCGETLANGAHAILDLLAADKLEITDGVRSLTQITDVVETAMGGTSGGLYSIFISALAKSLKDRELQQGGYEVTPQILAASLKDALESLYRYTRARAGDRTLIDALAPFVEQFAASKGDLNQANKACHEGAESTRKLKAKFGRASYVSEEEFKPFEAEGGLPDPGAIGLAALVDGFAEAYSKIGSNL</sequence>
<gene>
    <name type="primary">DAK</name>
</gene>
<evidence type="ECO:0000250" key="1"/>
<evidence type="ECO:0000255" key="2">
    <source>
        <dbReference type="PROSITE-ProRule" id="PRU00813"/>
    </source>
</evidence>
<evidence type="ECO:0000255" key="3">
    <source>
        <dbReference type="PROSITE-ProRule" id="PRU00814"/>
    </source>
</evidence>
<evidence type="ECO:0000305" key="4"/>
<proteinExistence type="inferred from homology"/>
<accession>O60017</accession>
<comment type="function">
    <text evidence="1">Catalyzes both the phosphorylation of dihydroxyacetone and of glyceraldehyde.</text>
</comment>
<comment type="catalytic activity">
    <reaction>
        <text>dihydroxyacetone + ATP = dihydroxyacetone phosphate + ADP + H(+)</text>
        <dbReference type="Rhea" id="RHEA:15773"/>
        <dbReference type="ChEBI" id="CHEBI:15378"/>
        <dbReference type="ChEBI" id="CHEBI:16016"/>
        <dbReference type="ChEBI" id="CHEBI:30616"/>
        <dbReference type="ChEBI" id="CHEBI:57642"/>
        <dbReference type="ChEBI" id="CHEBI:456216"/>
        <dbReference type="EC" id="2.7.1.29"/>
    </reaction>
</comment>
<comment type="catalytic activity">
    <reaction>
        <text>D-glyceraldehyde + ATP = D-glyceraldehyde 3-phosphate + ADP + H(+)</text>
        <dbReference type="Rhea" id="RHEA:13941"/>
        <dbReference type="ChEBI" id="CHEBI:15378"/>
        <dbReference type="ChEBI" id="CHEBI:17378"/>
        <dbReference type="ChEBI" id="CHEBI:30616"/>
        <dbReference type="ChEBI" id="CHEBI:59776"/>
        <dbReference type="ChEBI" id="CHEBI:456216"/>
        <dbReference type="EC" id="2.7.1.28"/>
    </reaction>
</comment>
<comment type="pathway">
    <text>Polyol metabolism; glycerol fermentation; glycerone phosphate from glycerol (oxidative route): step 2/2.</text>
</comment>
<comment type="similarity">
    <text evidence="4">Belongs to the dihydroxyacetone kinase (DAK) family.</text>
</comment>
<name>DAK_PICAN</name>